<evidence type="ECO:0000255" key="1">
    <source>
        <dbReference type="HAMAP-Rule" id="MF_01062"/>
    </source>
</evidence>
<gene>
    <name type="ordered locus">Lcho_2834</name>
</gene>
<accession>B1XXH9</accession>
<protein>
    <recommendedName>
        <fullName evidence="1">Putative phosphoenolpyruvate synthase regulatory protein</fullName>
        <shortName evidence="1">PEP synthase regulatory protein</shortName>
        <shortName evidence="1">PSRP</shortName>
        <ecNumber evidence="1">2.7.11.33</ecNumber>
        <ecNumber evidence="1">2.7.4.28</ecNumber>
    </recommendedName>
    <alternativeName>
        <fullName evidence="1">Pyruvate, water dikinase regulatory protein</fullName>
    </alternativeName>
</protein>
<dbReference type="EC" id="2.7.11.33" evidence="1"/>
<dbReference type="EC" id="2.7.4.28" evidence="1"/>
<dbReference type="EMBL" id="CP001013">
    <property type="protein sequence ID" value="ACB35099.1"/>
    <property type="molecule type" value="Genomic_DNA"/>
</dbReference>
<dbReference type="RefSeq" id="WP_012347853.1">
    <property type="nucleotide sequence ID" value="NC_010524.1"/>
</dbReference>
<dbReference type="SMR" id="B1XXH9"/>
<dbReference type="STRING" id="395495.Lcho_2834"/>
<dbReference type="KEGG" id="lch:Lcho_2834"/>
<dbReference type="eggNOG" id="COG1806">
    <property type="taxonomic scope" value="Bacteria"/>
</dbReference>
<dbReference type="HOGENOM" id="CLU_046206_1_0_4"/>
<dbReference type="OrthoDB" id="9782201at2"/>
<dbReference type="Proteomes" id="UP000001693">
    <property type="component" value="Chromosome"/>
</dbReference>
<dbReference type="GO" id="GO:0043531">
    <property type="term" value="F:ADP binding"/>
    <property type="evidence" value="ECO:0007669"/>
    <property type="project" value="UniProtKB-UniRule"/>
</dbReference>
<dbReference type="GO" id="GO:0005524">
    <property type="term" value="F:ATP binding"/>
    <property type="evidence" value="ECO:0007669"/>
    <property type="project" value="InterPro"/>
</dbReference>
<dbReference type="GO" id="GO:0016776">
    <property type="term" value="F:phosphotransferase activity, phosphate group as acceptor"/>
    <property type="evidence" value="ECO:0007669"/>
    <property type="project" value="UniProtKB-UniRule"/>
</dbReference>
<dbReference type="GO" id="GO:0004674">
    <property type="term" value="F:protein serine/threonine kinase activity"/>
    <property type="evidence" value="ECO:0007669"/>
    <property type="project" value="UniProtKB-UniRule"/>
</dbReference>
<dbReference type="HAMAP" id="MF_01062">
    <property type="entry name" value="PSRP"/>
    <property type="match status" value="1"/>
</dbReference>
<dbReference type="InterPro" id="IPR005177">
    <property type="entry name" value="Kinase-pyrophosphorylase"/>
</dbReference>
<dbReference type="InterPro" id="IPR026530">
    <property type="entry name" value="PSRP"/>
</dbReference>
<dbReference type="NCBIfam" id="NF003742">
    <property type="entry name" value="PRK05339.1"/>
    <property type="match status" value="1"/>
</dbReference>
<dbReference type="PANTHER" id="PTHR31756">
    <property type="entry name" value="PYRUVATE, PHOSPHATE DIKINASE REGULATORY PROTEIN 1, CHLOROPLASTIC"/>
    <property type="match status" value="1"/>
</dbReference>
<dbReference type="PANTHER" id="PTHR31756:SF3">
    <property type="entry name" value="PYRUVATE, PHOSPHATE DIKINASE REGULATORY PROTEIN 1, CHLOROPLASTIC"/>
    <property type="match status" value="1"/>
</dbReference>
<dbReference type="Pfam" id="PF03618">
    <property type="entry name" value="Kinase-PPPase"/>
    <property type="match status" value="1"/>
</dbReference>
<reference key="1">
    <citation type="submission" date="2008-03" db="EMBL/GenBank/DDBJ databases">
        <title>Complete sequence of Leptothrix cholodnii SP-6.</title>
        <authorList>
            <consortium name="US DOE Joint Genome Institute"/>
            <person name="Copeland A."/>
            <person name="Lucas S."/>
            <person name="Lapidus A."/>
            <person name="Glavina del Rio T."/>
            <person name="Dalin E."/>
            <person name="Tice H."/>
            <person name="Bruce D."/>
            <person name="Goodwin L."/>
            <person name="Pitluck S."/>
            <person name="Chertkov O."/>
            <person name="Brettin T."/>
            <person name="Detter J.C."/>
            <person name="Han C."/>
            <person name="Kuske C.R."/>
            <person name="Schmutz J."/>
            <person name="Larimer F."/>
            <person name="Land M."/>
            <person name="Hauser L."/>
            <person name="Kyrpides N."/>
            <person name="Lykidis A."/>
            <person name="Emerson D."/>
            <person name="Richardson P."/>
        </authorList>
    </citation>
    <scope>NUCLEOTIDE SEQUENCE [LARGE SCALE GENOMIC DNA]</scope>
    <source>
        <strain>ATCC 51168 / LMG 8142 / SP-6</strain>
    </source>
</reference>
<organism>
    <name type="scientific">Leptothrix cholodnii (strain ATCC 51168 / LMG 8142 / SP-6)</name>
    <name type="common">Leptothrix discophora (strain SP-6)</name>
    <dbReference type="NCBI Taxonomy" id="395495"/>
    <lineage>
        <taxon>Bacteria</taxon>
        <taxon>Pseudomonadati</taxon>
        <taxon>Pseudomonadota</taxon>
        <taxon>Betaproteobacteria</taxon>
        <taxon>Burkholderiales</taxon>
        <taxon>Sphaerotilaceae</taxon>
        <taxon>Leptothrix</taxon>
    </lineage>
</organism>
<name>PSRP_LEPCP</name>
<feature type="chain" id="PRO_1000136480" description="Putative phosphoenolpyruvate synthase regulatory protein">
    <location>
        <begin position="1"/>
        <end position="273"/>
    </location>
</feature>
<feature type="binding site" evidence="1">
    <location>
        <begin position="153"/>
        <end position="160"/>
    </location>
    <ligand>
        <name>ADP</name>
        <dbReference type="ChEBI" id="CHEBI:456216"/>
    </ligand>
</feature>
<comment type="function">
    <text evidence="1">Bifunctional serine/threonine kinase and phosphorylase involved in the regulation of the phosphoenolpyruvate synthase (PEPS) by catalyzing its phosphorylation/dephosphorylation.</text>
</comment>
<comment type="catalytic activity">
    <reaction evidence="1">
        <text>[pyruvate, water dikinase] + ADP = [pyruvate, water dikinase]-phosphate + AMP + H(+)</text>
        <dbReference type="Rhea" id="RHEA:46020"/>
        <dbReference type="Rhea" id="RHEA-COMP:11425"/>
        <dbReference type="Rhea" id="RHEA-COMP:11426"/>
        <dbReference type="ChEBI" id="CHEBI:15378"/>
        <dbReference type="ChEBI" id="CHEBI:43176"/>
        <dbReference type="ChEBI" id="CHEBI:68546"/>
        <dbReference type="ChEBI" id="CHEBI:456215"/>
        <dbReference type="ChEBI" id="CHEBI:456216"/>
        <dbReference type="EC" id="2.7.11.33"/>
    </reaction>
</comment>
<comment type="catalytic activity">
    <reaction evidence="1">
        <text>[pyruvate, water dikinase]-phosphate + phosphate + H(+) = [pyruvate, water dikinase] + diphosphate</text>
        <dbReference type="Rhea" id="RHEA:48580"/>
        <dbReference type="Rhea" id="RHEA-COMP:11425"/>
        <dbReference type="Rhea" id="RHEA-COMP:11426"/>
        <dbReference type="ChEBI" id="CHEBI:15378"/>
        <dbReference type="ChEBI" id="CHEBI:33019"/>
        <dbReference type="ChEBI" id="CHEBI:43176"/>
        <dbReference type="ChEBI" id="CHEBI:43474"/>
        <dbReference type="ChEBI" id="CHEBI:68546"/>
        <dbReference type="EC" id="2.7.4.28"/>
    </reaction>
</comment>
<comment type="similarity">
    <text evidence="1">Belongs to the pyruvate, phosphate/water dikinase regulatory protein family. PSRP subfamily.</text>
</comment>
<keyword id="KW-0418">Kinase</keyword>
<keyword id="KW-0547">Nucleotide-binding</keyword>
<keyword id="KW-1185">Reference proteome</keyword>
<keyword id="KW-0723">Serine/threonine-protein kinase</keyword>
<keyword id="KW-0808">Transferase</keyword>
<proteinExistence type="inferred from homology"/>
<sequence>MPNRTVFFVSDGTGITAETFGNSILAQFAIKPRHVRRPFIDNAEKADQVITEINGAALAEGKRPIVFITIVNDTVREKIGSHSNALVLDMFRTFVEPLEAELQLTSNHRVGRFSDVAKSQEYHDRIEAINFSLAHDDGQSSRNLAEADVILVGVSRSGKTPTSLYLAMQHGIKAANYPLIPEDFERDSIPSSLAPYKRKCFGLTIDADRLSQIRNERRPGSKYAALANCRYEINEAERMMKREGISWLSSTHKSIEEIATTILRDIRPDRLIY</sequence>